<name>RS14Z_STRP3</name>
<comment type="function">
    <text evidence="1">Binds 16S rRNA, required for the assembly of 30S particles and may also be responsible for determining the conformation of the 16S rRNA at the A site.</text>
</comment>
<comment type="cofactor">
    <cofactor evidence="1">
        <name>Zn(2+)</name>
        <dbReference type="ChEBI" id="CHEBI:29105"/>
    </cofactor>
    <text evidence="1">Binds 1 zinc ion per subunit.</text>
</comment>
<comment type="subunit">
    <text evidence="1">Part of the 30S ribosomal subunit. Contacts proteins S3 and S10.</text>
</comment>
<comment type="similarity">
    <text evidence="1">Belongs to the universal ribosomal protein uS14 family. Zinc-binding uS14 subfamily.</text>
</comment>
<feature type="chain" id="PRO_0000130945" description="Small ribosomal subunit protein uS14B">
    <location>
        <begin position="1"/>
        <end position="61"/>
    </location>
</feature>
<feature type="binding site" evidence="1">
    <location>
        <position position="24"/>
    </location>
    <ligand>
        <name>Zn(2+)</name>
        <dbReference type="ChEBI" id="CHEBI:29105"/>
    </ligand>
</feature>
<feature type="binding site" evidence="1">
    <location>
        <position position="27"/>
    </location>
    <ligand>
        <name>Zn(2+)</name>
        <dbReference type="ChEBI" id="CHEBI:29105"/>
    </ligand>
</feature>
<feature type="binding site" evidence="1">
    <location>
        <position position="40"/>
    </location>
    <ligand>
        <name>Zn(2+)</name>
        <dbReference type="ChEBI" id="CHEBI:29105"/>
    </ligand>
</feature>
<feature type="binding site" evidence="1">
    <location>
        <position position="43"/>
    </location>
    <ligand>
        <name>Zn(2+)</name>
        <dbReference type="ChEBI" id="CHEBI:29105"/>
    </ligand>
</feature>
<sequence length="61" mass="7073">MAKKSMIAKNKRPAKHSTQAYTRCEKCGRPHSVYRKFKLCRVCFRELAYKGQIPGVVKASW</sequence>
<protein>
    <recommendedName>
        <fullName evidence="1">Small ribosomal subunit protein uS14B</fullName>
    </recommendedName>
    <alternativeName>
        <fullName evidence="2">30S ribosomal protein S14 type Z</fullName>
    </alternativeName>
</protein>
<dbReference type="EMBL" id="AE014074">
    <property type="protein sequence ID" value="AAM78660.1"/>
    <property type="molecule type" value="Genomic_DNA"/>
</dbReference>
<dbReference type="RefSeq" id="WP_002987746.1">
    <property type="nucleotide sequence ID" value="NC_004070.1"/>
</dbReference>
<dbReference type="SMR" id="P0DE72"/>
<dbReference type="KEGG" id="spg:SpyM3_0053"/>
<dbReference type="HOGENOM" id="CLU_139869_3_0_9"/>
<dbReference type="Proteomes" id="UP000000564">
    <property type="component" value="Chromosome"/>
</dbReference>
<dbReference type="GO" id="GO:0015935">
    <property type="term" value="C:small ribosomal subunit"/>
    <property type="evidence" value="ECO:0007669"/>
    <property type="project" value="TreeGrafter"/>
</dbReference>
<dbReference type="GO" id="GO:0019843">
    <property type="term" value="F:rRNA binding"/>
    <property type="evidence" value="ECO:0007669"/>
    <property type="project" value="UniProtKB-UniRule"/>
</dbReference>
<dbReference type="GO" id="GO:0003735">
    <property type="term" value="F:structural constituent of ribosome"/>
    <property type="evidence" value="ECO:0007669"/>
    <property type="project" value="InterPro"/>
</dbReference>
<dbReference type="GO" id="GO:0008270">
    <property type="term" value="F:zinc ion binding"/>
    <property type="evidence" value="ECO:0007669"/>
    <property type="project" value="UniProtKB-UniRule"/>
</dbReference>
<dbReference type="GO" id="GO:0006412">
    <property type="term" value="P:translation"/>
    <property type="evidence" value="ECO:0007669"/>
    <property type="project" value="UniProtKB-UniRule"/>
</dbReference>
<dbReference type="FunFam" id="4.10.830.10:FF:000001">
    <property type="entry name" value="30S ribosomal protein S14 type Z"/>
    <property type="match status" value="1"/>
</dbReference>
<dbReference type="Gene3D" id="4.10.830.10">
    <property type="entry name" value="30s Ribosomal Protein S14, Chain N"/>
    <property type="match status" value="1"/>
</dbReference>
<dbReference type="HAMAP" id="MF_01364_B">
    <property type="entry name" value="Ribosomal_uS14_2_B"/>
    <property type="match status" value="1"/>
</dbReference>
<dbReference type="InterPro" id="IPR001209">
    <property type="entry name" value="Ribosomal_uS14"/>
</dbReference>
<dbReference type="InterPro" id="IPR023053">
    <property type="entry name" value="Ribosomal_uS14_bact"/>
</dbReference>
<dbReference type="InterPro" id="IPR018271">
    <property type="entry name" value="Ribosomal_uS14_CS"/>
</dbReference>
<dbReference type="InterPro" id="IPR043140">
    <property type="entry name" value="Ribosomal_uS14_sf"/>
</dbReference>
<dbReference type="NCBIfam" id="NF005974">
    <property type="entry name" value="PRK08061.1"/>
    <property type="match status" value="1"/>
</dbReference>
<dbReference type="PANTHER" id="PTHR19836">
    <property type="entry name" value="30S RIBOSOMAL PROTEIN S14"/>
    <property type="match status" value="1"/>
</dbReference>
<dbReference type="PANTHER" id="PTHR19836:SF26">
    <property type="entry name" value="SMALL RIBOSOMAL SUBUNIT PROTEIN US14B"/>
    <property type="match status" value="1"/>
</dbReference>
<dbReference type="Pfam" id="PF00253">
    <property type="entry name" value="Ribosomal_S14"/>
    <property type="match status" value="1"/>
</dbReference>
<dbReference type="SUPFAM" id="SSF57716">
    <property type="entry name" value="Glucocorticoid receptor-like (DNA-binding domain)"/>
    <property type="match status" value="1"/>
</dbReference>
<dbReference type="PROSITE" id="PS00527">
    <property type="entry name" value="RIBOSOMAL_S14"/>
    <property type="match status" value="1"/>
</dbReference>
<proteinExistence type="inferred from homology"/>
<reference key="1">
    <citation type="journal article" date="2002" name="Proc. Natl. Acad. Sci. U.S.A.">
        <title>Genome sequence of a serotype M3 strain of group A Streptococcus: phage-encoded toxins, the high-virulence phenotype, and clone emergence.</title>
        <authorList>
            <person name="Beres S.B."/>
            <person name="Sylva G.L."/>
            <person name="Barbian K.D."/>
            <person name="Lei B."/>
            <person name="Hoff J.S."/>
            <person name="Mammarella N.D."/>
            <person name="Liu M.-Y."/>
            <person name="Smoot J.C."/>
            <person name="Porcella S.F."/>
            <person name="Parkins L.D."/>
            <person name="Campbell D.S."/>
            <person name="Smith T.M."/>
            <person name="McCormick J.K."/>
            <person name="Leung D.Y.M."/>
            <person name="Schlievert P.M."/>
            <person name="Musser J.M."/>
        </authorList>
    </citation>
    <scope>NUCLEOTIDE SEQUENCE [LARGE SCALE GENOMIC DNA]</scope>
    <source>
        <strain>ATCC BAA-595 / MGAS315</strain>
    </source>
</reference>
<evidence type="ECO:0000255" key="1">
    <source>
        <dbReference type="HAMAP-Rule" id="MF_01364"/>
    </source>
</evidence>
<evidence type="ECO:0000305" key="2"/>
<keyword id="KW-0479">Metal-binding</keyword>
<keyword id="KW-0687">Ribonucleoprotein</keyword>
<keyword id="KW-0689">Ribosomal protein</keyword>
<keyword id="KW-0694">RNA-binding</keyword>
<keyword id="KW-0699">rRNA-binding</keyword>
<keyword id="KW-0862">Zinc</keyword>
<accession>P0DE72</accession>
<accession>P66422</accession>
<accession>Q9A1W1</accession>
<gene>
    <name evidence="1" type="primary">rpsZ</name>
    <name evidence="1" type="synonym">rpsN.1</name>
    <name evidence="1" type="synonym">rpsN1</name>
    <name type="ordered locus">SpyM3_0053</name>
</gene>
<organism>
    <name type="scientific">Streptococcus pyogenes serotype M3 (strain ATCC BAA-595 / MGAS315)</name>
    <dbReference type="NCBI Taxonomy" id="198466"/>
    <lineage>
        <taxon>Bacteria</taxon>
        <taxon>Bacillati</taxon>
        <taxon>Bacillota</taxon>
        <taxon>Bacilli</taxon>
        <taxon>Lactobacillales</taxon>
        <taxon>Streptococcaceae</taxon>
        <taxon>Streptococcus</taxon>
    </lineage>
</organism>